<feature type="chain" id="PRO_0000158818" description="Adenylate kinase">
    <location>
        <begin position="1"/>
        <end position="181"/>
    </location>
</feature>
<feature type="region of interest" description="NMP" evidence="1">
    <location>
        <begin position="30"/>
        <end position="59"/>
    </location>
</feature>
<feature type="region of interest" description="LID" evidence="1">
    <location>
        <begin position="126"/>
        <end position="132"/>
    </location>
</feature>
<feature type="binding site" evidence="1">
    <location>
        <begin position="10"/>
        <end position="15"/>
    </location>
    <ligand>
        <name>ATP</name>
        <dbReference type="ChEBI" id="CHEBI:30616"/>
    </ligand>
</feature>
<feature type="binding site" evidence="1">
    <location>
        <position position="31"/>
    </location>
    <ligand>
        <name>AMP</name>
        <dbReference type="ChEBI" id="CHEBI:456215"/>
    </ligand>
</feature>
<feature type="binding site" evidence="1">
    <location>
        <position position="36"/>
    </location>
    <ligand>
        <name>AMP</name>
        <dbReference type="ChEBI" id="CHEBI:456215"/>
    </ligand>
</feature>
<feature type="binding site" evidence="1">
    <location>
        <begin position="57"/>
        <end position="59"/>
    </location>
    <ligand>
        <name>AMP</name>
        <dbReference type="ChEBI" id="CHEBI:456215"/>
    </ligand>
</feature>
<feature type="binding site" evidence="1">
    <location>
        <begin position="85"/>
        <end position="88"/>
    </location>
    <ligand>
        <name>AMP</name>
        <dbReference type="ChEBI" id="CHEBI:456215"/>
    </ligand>
</feature>
<feature type="binding site" evidence="1">
    <location>
        <position position="92"/>
    </location>
    <ligand>
        <name>AMP</name>
        <dbReference type="ChEBI" id="CHEBI:456215"/>
    </ligand>
</feature>
<feature type="binding site" evidence="1">
    <location>
        <position position="127"/>
    </location>
    <ligand>
        <name>ATP</name>
        <dbReference type="ChEBI" id="CHEBI:30616"/>
    </ligand>
</feature>
<feature type="binding site" evidence="1">
    <location>
        <position position="129"/>
    </location>
    <ligand>
        <name>AMP</name>
        <dbReference type="ChEBI" id="CHEBI:456215"/>
    </ligand>
</feature>
<feature type="binding site" evidence="1">
    <location>
        <position position="140"/>
    </location>
    <ligand>
        <name>AMP</name>
        <dbReference type="ChEBI" id="CHEBI:456215"/>
    </ligand>
</feature>
<feature type="binding site" evidence="1">
    <location>
        <position position="166"/>
    </location>
    <ligand>
        <name>ATP</name>
        <dbReference type="ChEBI" id="CHEBI:30616"/>
    </ligand>
</feature>
<sequence length="181" mass="19859">MRVVLLGPPGAGKGTQAVLLSEKLGVPHISTGDLFRANISQQTPLGREAQKYMDAGDLVPSDVTNRMVEARVNEPDAANGFVLDGYPRTVDQADALEKILGDMNSKLDAVLCFVVPEDTVVERMLARGRNDDTEDVIRNRMRVYREETEPLLDHYDGLVVTVDGVGEVDEVNERALRALGR</sequence>
<evidence type="ECO:0000255" key="1">
    <source>
        <dbReference type="HAMAP-Rule" id="MF_00235"/>
    </source>
</evidence>
<dbReference type="EC" id="2.7.4.3" evidence="1"/>
<dbReference type="EMBL" id="AP006618">
    <property type="protein sequence ID" value="BAD55640.1"/>
    <property type="molecule type" value="Genomic_DNA"/>
</dbReference>
<dbReference type="RefSeq" id="WP_011207326.1">
    <property type="nucleotide sequence ID" value="NC_006361.1"/>
</dbReference>
<dbReference type="SMR" id="Q5Z1Q1"/>
<dbReference type="STRING" id="247156.NFA_7950"/>
<dbReference type="GeneID" id="61131626"/>
<dbReference type="KEGG" id="nfa:NFA_7950"/>
<dbReference type="eggNOG" id="COG0563">
    <property type="taxonomic scope" value="Bacteria"/>
</dbReference>
<dbReference type="HOGENOM" id="CLU_032354_4_1_11"/>
<dbReference type="OrthoDB" id="9805030at2"/>
<dbReference type="UniPathway" id="UPA00588">
    <property type="reaction ID" value="UER00649"/>
</dbReference>
<dbReference type="Proteomes" id="UP000006820">
    <property type="component" value="Chromosome"/>
</dbReference>
<dbReference type="GO" id="GO:0005737">
    <property type="term" value="C:cytoplasm"/>
    <property type="evidence" value="ECO:0007669"/>
    <property type="project" value="UniProtKB-SubCell"/>
</dbReference>
<dbReference type="GO" id="GO:0004017">
    <property type="term" value="F:adenylate kinase activity"/>
    <property type="evidence" value="ECO:0007669"/>
    <property type="project" value="UniProtKB-UniRule"/>
</dbReference>
<dbReference type="GO" id="GO:0005524">
    <property type="term" value="F:ATP binding"/>
    <property type="evidence" value="ECO:0007669"/>
    <property type="project" value="UniProtKB-UniRule"/>
</dbReference>
<dbReference type="GO" id="GO:0044209">
    <property type="term" value="P:AMP salvage"/>
    <property type="evidence" value="ECO:0007669"/>
    <property type="project" value="UniProtKB-UniRule"/>
</dbReference>
<dbReference type="CDD" id="cd01428">
    <property type="entry name" value="ADK"/>
    <property type="match status" value="1"/>
</dbReference>
<dbReference type="Gene3D" id="3.40.50.300">
    <property type="entry name" value="P-loop containing nucleotide triphosphate hydrolases"/>
    <property type="match status" value="1"/>
</dbReference>
<dbReference type="HAMAP" id="MF_00235">
    <property type="entry name" value="Adenylate_kinase_Adk"/>
    <property type="match status" value="1"/>
</dbReference>
<dbReference type="InterPro" id="IPR000850">
    <property type="entry name" value="Adenylat/UMP-CMP_kin"/>
</dbReference>
<dbReference type="InterPro" id="IPR033690">
    <property type="entry name" value="Adenylat_kinase_CS"/>
</dbReference>
<dbReference type="InterPro" id="IPR027417">
    <property type="entry name" value="P-loop_NTPase"/>
</dbReference>
<dbReference type="NCBIfam" id="NF001381">
    <property type="entry name" value="PRK00279.1-3"/>
    <property type="match status" value="1"/>
</dbReference>
<dbReference type="NCBIfam" id="NF011100">
    <property type="entry name" value="PRK14527.1"/>
    <property type="match status" value="1"/>
</dbReference>
<dbReference type="NCBIfam" id="NF011104">
    <property type="entry name" value="PRK14531.1"/>
    <property type="match status" value="1"/>
</dbReference>
<dbReference type="PANTHER" id="PTHR23359">
    <property type="entry name" value="NUCLEOTIDE KINASE"/>
    <property type="match status" value="1"/>
</dbReference>
<dbReference type="Pfam" id="PF00406">
    <property type="entry name" value="ADK"/>
    <property type="match status" value="1"/>
</dbReference>
<dbReference type="PRINTS" id="PR00094">
    <property type="entry name" value="ADENYLTKNASE"/>
</dbReference>
<dbReference type="SUPFAM" id="SSF52540">
    <property type="entry name" value="P-loop containing nucleoside triphosphate hydrolases"/>
    <property type="match status" value="1"/>
</dbReference>
<dbReference type="PROSITE" id="PS00113">
    <property type="entry name" value="ADENYLATE_KINASE"/>
    <property type="match status" value="1"/>
</dbReference>
<gene>
    <name evidence="1" type="primary">adk</name>
    <name type="ordered locus">NFA_7950</name>
</gene>
<reference key="1">
    <citation type="journal article" date="2004" name="Proc. Natl. Acad. Sci. U.S.A.">
        <title>The complete genomic sequence of Nocardia farcinica IFM 10152.</title>
        <authorList>
            <person name="Ishikawa J."/>
            <person name="Yamashita A."/>
            <person name="Mikami Y."/>
            <person name="Hoshino Y."/>
            <person name="Kurita H."/>
            <person name="Hotta K."/>
            <person name="Shiba T."/>
            <person name="Hattori M."/>
        </authorList>
    </citation>
    <scope>NUCLEOTIDE SEQUENCE [LARGE SCALE GENOMIC DNA]</scope>
    <source>
        <strain>IFM 10152</strain>
    </source>
</reference>
<name>KAD_NOCFA</name>
<accession>Q5Z1Q1</accession>
<keyword id="KW-0067">ATP-binding</keyword>
<keyword id="KW-0963">Cytoplasm</keyword>
<keyword id="KW-0418">Kinase</keyword>
<keyword id="KW-0545">Nucleotide biosynthesis</keyword>
<keyword id="KW-0547">Nucleotide-binding</keyword>
<keyword id="KW-1185">Reference proteome</keyword>
<keyword id="KW-0808">Transferase</keyword>
<organism>
    <name type="scientific">Nocardia farcinica (strain IFM 10152)</name>
    <dbReference type="NCBI Taxonomy" id="247156"/>
    <lineage>
        <taxon>Bacteria</taxon>
        <taxon>Bacillati</taxon>
        <taxon>Actinomycetota</taxon>
        <taxon>Actinomycetes</taxon>
        <taxon>Mycobacteriales</taxon>
        <taxon>Nocardiaceae</taxon>
        <taxon>Nocardia</taxon>
    </lineage>
</organism>
<comment type="function">
    <text evidence="1">Catalyzes the reversible transfer of the terminal phosphate group between ATP and AMP. Plays an important role in cellular energy homeostasis and in adenine nucleotide metabolism.</text>
</comment>
<comment type="catalytic activity">
    <reaction evidence="1">
        <text>AMP + ATP = 2 ADP</text>
        <dbReference type="Rhea" id="RHEA:12973"/>
        <dbReference type="ChEBI" id="CHEBI:30616"/>
        <dbReference type="ChEBI" id="CHEBI:456215"/>
        <dbReference type="ChEBI" id="CHEBI:456216"/>
        <dbReference type="EC" id="2.7.4.3"/>
    </reaction>
</comment>
<comment type="pathway">
    <text evidence="1">Purine metabolism; AMP biosynthesis via salvage pathway; AMP from ADP: step 1/1.</text>
</comment>
<comment type="subunit">
    <text evidence="1">Monomer.</text>
</comment>
<comment type="subcellular location">
    <subcellularLocation>
        <location evidence="1">Cytoplasm</location>
    </subcellularLocation>
</comment>
<comment type="domain">
    <text evidence="1">Consists of three domains, a large central CORE domain and two small peripheral domains, NMPbind and LID, which undergo movements during catalysis. The LID domain closes over the site of phosphoryl transfer upon ATP binding. Assembling and dissambling the active center during each catalytic cycle provides an effective means to prevent ATP hydrolysis.</text>
</comment>
<comment type="similarity">
    <text evidence="1">Belongs to the adenylate kinase family.</text>
</comment>
<proteinExistence type="inferred from homology"/>
<protein>
    <recommendedName>
        <fullName evidence="1">Adenylate kinase</fullName>
        <shortName evidence="1">AK</shortName>
        <ecNumber evidence="1">2.7.4.3</ecNumber>
    </recommendedName>
    <alternativeName>
        <fullName evidence="1">ATP-AMP transphosphorylase</fullName>
    </alternativeName>
    <alternativeName>
        <fullName evidence="1">ATP:AMP phosphotransferase</fullName>
    </alternativeName>
    <alternativeName>
        <fullName evidence="1">Adenylate monophosphate kinase</fullName>
    </alternativeName>
</protein>